<gene>
    <name type="ORF">CPIJ019543</name>
</gene>
<proteinExistence type="inferred from homology"/>
<organism>
    <name type="scientific">Culex quinquefasciatus</name>
    <name type="common">Southern house mosquito</name>
    <name type="synonym">Culex pungens</name>
    <dbReference type="NCBI Taxonomy" id="7176"/>
    <lineage>
        <taxon>Eukaryota</taxon>
        <taxon>Metazoa</taxon>
        <taxon>Ecdysozoa</taxon>
        <taxon>Arthropoda</taxon>
        <taxon>Hexapoda</taxon>
        <taxon>Insecta</taxon>
        <taxon>Pterygota</taxon>
        <taxon>Neoptera</taxon>
        <taxon>Endopterygota</taxon>
        <taxon>Diptera</taxon>
        <taxon>Nematocera</taxon>
        <taxon>Culicoidea</taxon>
        <taxon>Culicidae</taxon>
        <taxon>Culicinae</taxon>
        <taxon>Culicini</taxon>
        <taxon>Culex</taxon>
        <taxon>Culex</taxon>
    </lineage>
</organism>
<reference key="1">
    <citation type="submission" date="2007-03" db="EMBL/GenBank/DDBJ databases">
        <title>Annotation of Culex pipiens quinquefasciatus.</title>
        <authorList>
            <consortium name="The Broad Institute Genome Sequencing Platform"/>
            <person name="Atkinson P.W."/>
            <person name="Hemingway J."/>
            <person name="Christensen B.M."/>
            <person name="Higgs S."/>
            <person name="Kodira C.D."/>
            <person name="Hannick L.I."/>
            <person name="Megy K."/>
            <person name="O'Leary S.B."/>
            <person name="Pearson M."/>
            <person name="Haas B.J."/>
            <person name="Mauceli E."/>
            <person name="Wortman J.R."/>
            <person name="Lee N.H."/>
            <person name="Guigo R."/>
            <person name="Stanke M."/>
            <person name="Alvarado L."/>
            <person name="Amedeo P."/>
            <person name="Antoine C.H."/>
            <person name="Arensburger P."/>
            <person name="Bidwell S.L."/>
            <person name="Crawford M."/>
            <person name="Camaro F."/>
            <person name="Devon K."/>
            <person name="Engels R."/>
            <person name="Hammond M."/>
            <person name="Howarth C."/>
            <person name="Koehrsen M."/>
            <person name="Lawson D."/>
            <person name="Montgomery P."/>
            <person name="Nene V."/>
            <person name="Nusbaum C."/>
            <person name="Puiu D."/>
            <person name="Romero-Severson J."/>
            <person name="Severson D.W."/>
            <person name="Shumway M."/>
            <person name="Sisk P."/>
            <person name="Stolte C."/>
            <person name="Zeng Q."/>
            <person name="Eisenstadt E."/>
            <person name="Fraser-Liggett C.M."/>
            <person name="Strausberg R."/>
            <person name="Galagan J."/>
            <person name="Birren B."/>
            <person name="Collins F.H."/>
        </authorList>
    </citation>
    <scope>NUCLEOTIDE SEQUENCE [LARGE SCALE GENOMIC DNA]</scope>
    <source>
        <strain>JHB</strain>
    </source>
</reference>
<sequence length="502" mass="55946">MVVRDYNTELTYIERISTNSFRIKKGFQPNMNVEGIFYANSRLEKLMFDELRNSCRPGMTGGFLPGVKQIANVAALPGIVGRSVGLPDIHSGYGFAIGNMAAFDMSDPTSIVSPGGVGFDINCGVRLLRTNLFEKDVKPVQEQLAQSLFDHIPVGVGSKGIIPMNAHDLEEALEMGMDWSLREGYVWAEDKEHCEEYGRMLTADPSKVSMRAKKRGLPQLGTLGAGNHYAEIQVVEEIYDKYAASKMGIEELGQICVMIHSGSRGFGHQVATDALVEMEKAMKRDKIETNDRQLACARINSVEGQNYLKAMSAAANFAWVNRSSMTFLTRQAFAKQFNTTPDDLDMHVIYDVSHNVAKIEEHIVDGRPKQLLVHRKGSTRAFPPHHPLIPVDYQLTGQPVLVGGSMGTCSFVLTGTEKGMAETFGSTCHGAGRSLSRAKSRRNLDYRTSCGIWRRREFPSGWRRRSWSRRKHPIRTRTCVMWCRPVTTWASVPSASSCGRLR</sequence>
<dbReference type="EC" id="6.5.1.8" evidence="1"/>
<dbReference type="EMBL" id="DS233815">
    <property type="protein sequence ID" value="EDS31844.1"/>
    <property type="molecule type" value="Genomic_DNA"/>
</dbReference>
<dbReference type="RefSeq" id="XP_001870125.1">
    <property type="nucleotide sequence ID" value="XM_001870090.1"/>
</dbReference>
<dbReference type="SMR" id="B0XKF3"/>
<dbReference type="STRING" id="7176.B0XKF3"/>
<dbReference type="EnsemblMetazoa" id="CPIJ019543-RA">
    <property type="protein sequence ID" value="CPIJ019543-PA"/>
    <property type="gene ID" value="CPIJ019543"/>
</dbReference>
<dbReference type="KEGG" id="cqu:CpipJ_CPIJ019543"/>
<dbReference type="VEuPathDB" id="VectorBase:CPIJ019543"/>
<dbReference type="VEuPathDB" id="VectorBase:CQUJHB017199"/>
<dbReference type="eggNOG" id="KOG3833">
    <property type="taxonomic scope" value="Eukaryota"/>
</dbReference>
<dbReference type="HOGENOM" id="CLU_022279_0_0_1"/>
<dbReference type="InParanoid" id="B0XKF3"/>
<dbReference type="OMA" id="TRGECCR"/>
<dbReference type="OrthoDB" id="10249697at2759"/>
<dbReference type="PhylomeDB" id="B0XKF3"/>
<dbReference type="Proteomes" id="UP000002320">
    <property type="component" value="Unassembled WGS sequence"/>
</dbReference>
<dbReference type="GO" id="GO:0005634">
    <property type="term" value="C:nucleus"/>
    <property type="evidence" value="ECO:0007669"/>
    <property type="project" value="TreeGrafter"/>
</dbReference>
<dbReference type="GO" id="GO:0072669">
    <property type="term" value="C:tRNA-splicing ligase complex"/>
    <property type="evidence" value="ECO:0007669"/>
    <property type="project" value="UniProtKB-UniRule"/>
</dbReference>
<dbReference type="GO" id="GO:0005525">
    <property type="term" value="F:GTP binding"/>
    <property type="evidence" value="ECO:0007669"/>
    <property type="project" value="UniProtKB-KW"/>
</dbReference>
<dbReference type="GO" id="GO:0046872">
    <property type="term" value="F:metal ion binding"/>
    <property type="evidence" value="ECO:0007669"/>
    <property type="project" value="UniProtKB-KW"/>
</dbReference>
<dbReference type="GO" id="GO:0003972">
    <property type="term" value="F:RNA ligase (ATP) activity"/>
    <property type="evidence" value="ECO:0007669"/>
    <property type="project" value="TreeGrafter"/>
</dbReference>
<dbReference type="GO" id="GO:0170057">
    <property type="term" value="F:RNA ligase (GTP) activity"/>
    <property type="evidence" value="ECO:0007669"/>
    <property type="project" value="UniProtKB-EC"/>
</dbReference>
<dbReference type="GO" id="GO:0006388">
    <property type="term" value="P:tRNA splicing, via endonucleolytic cleavage and ligation"/>
    <property type="evidence" value="ECO:0007669"/>
    <property type="project" value="UniProtKB-UniRule"/>
</dbReference>
<dbReference type="FunFam" id="3.90.1860.10:FF:000001">
    <property type="entry name" value="tRNA-splicing ligase RtcB homolog"/>
    <property type="match status" value="1"/>
</dbReference>
<dbReference type="Gene3D" id="3.90.1860.10">
    <property type="entry name" value="tRNA-splicing ligase RtcB"/>
    <property type="match status" value="1"/>
</dbReference>
<dbReference type="HAMAP" id="MF_03144">
    <property type="entry name" value="RtcB_euk"/>
    <property type="match status" value="1"/>
</dbReference>
<dbReference type="InterPro" id="IPR001233">
    <property type="entry name" value="RtcB"/>
</dbReference>
<dbReference type="InterPro" id="IPR036025">
    <property type="entry name" value="RtcB-like_sf"/>
</dbReference>
<dbReference type="InterPro" id="IPR027513">
    <property type="entry name" value="RtcB_euk"/>
</dbReference>
<dbReference type="PANTHER" id="PTHR11118">
    <property type="entry name" value="RNA-SPLICING LIGASE RTCB HOMOLOG"/>
    <property type="match status" value="1"/>
</dbReference>
<dbReference type="PANTHER" id="PTHR11118:SF1">
    <property type="entry name" value="RNA-SPLICING LIGASE RTCB HOMOLOG"/>
    <property type="match status" value="1"/>
</dbReference>
<dbReference type="Pfam" id="PF01139">
    <property type="entry name" value="RtcB"/>
    <property type="match status" value="1"/>
</dbReference>
<dbReference type="SUPFAM" id="SSF103365">
    <property type="entry name" value="Hypothetical protein PH1602"/>
    <property type="match status" value="1"/>
</dbReference>
<dbReference type="PROSITE" id="PS01288">
    <property type="entry name" value="UPF0027"/>
    <property type="match status" value="1"/>
</dbReference>
<evidence type="ECO:0000255" key="1">
    <source>
        <dbReference type="HAMAP-Rule" id="MF_03144"/>
    </source>
</evidence>
<keyword id="KW-0342">GTP-binding</keyword>
<keyword id="KW-0436">Ligase</keyword>
<keyword id="KW-0464">Manganese</keyword>
<keyword id="KW-0479">Metal-binding</keyword>
<keyword id="KW-0547">Nucleotide-binding</keyword>
<keyword id="KW-1185">Reference proteome</keyword>
<keyword id="KW-0819">tRNA processing</keyword>
<name>RTCB2_CULQU</name>
<feature type="chain" id="PRO_0000407225" description="RNA-splicing ligase RtcB homolog 2">
    <location>
        <begin position="1"/>
        <end position="502"/>
    </location>
</feature>
<feature type="active site" description="GMP-histidine intermediate" evidence="1">
    <location>
        <position position="429"/>
    </location>
</feature>
<feature type="binding site" evidence="1">
    <location>
        <position position="120"/>
    </location>
    <ligand>
        <name>Mn(2+)</name>
        <dbReference type="ChEBI" id="CHEBI:29035"/>
        <label>1</label>
    </ligand>
</feature>
<feature type="binding site" evidence="1">
    <location>
        <position position="123"/>
    </location>
    <ligand>
        <name>Mn(2+)</name>
        <dbReference type="ChEBI" id="CHEBI:29035"/>
        <label>1</label>
    </ligand>
</feature>
<feature type="binding site" evidence="1">
    <location>
        <position position="123"/>
    </location>
    <ligand>
        <name>Mn(2+)</name>
        <dbReference type="ChEBI" id="CHEBI:29035"/>
        <label>2</label>
    </ligand>
</feature>
<feature type="binding site" evidence="1">
    <location>
        <begin position="227"/>
        <end position="231"/>
    </location>
    <ligand>
        <name>GMP</name>
        <dbReference type="ChEBI" id="CHEBI:58115"/>
    </ligand>
</feature>
<feature type="binding site" evidence="1">
    <location>
        <position position="228"/>
    </location>
    <ligand>
        <name>Mn(2+)</name>
        <dbReference type="ChEBI" id="CHEBI:29035"/>
        <label>1</label>
    </ligand>
</feature>
<feature type="binding site" evidence="1">
    <location>
        <position position="260"/>
    </location>
    <ligand>
        <name>Mn(2+)</name>
        <dbReference type="ChEBI" id="CHEBI:29035"/>
        <label>2</label>
    </ligand>
</feature>
<feature type="binding site" evidence="1">
    <location>
        <begin position="354"/>
        <end position="355"/>
    </location>
    <ligand>
        <name>GMP</name>
        <dbReference type="ChEBI" id="CHEBI:58115"/>
    </ligand>
</feature>
<feature type="binding site" evidence="1">
    <location>
        <position position="354"/>
    </location>
    <ligand>
        <name>Mn(2+)</name>
        <dbReference type="ChEBI" id="CHEBI:29035"/>
        <label>2</label>
    </ligand>
</feature>
<feature type="binding site" evidence="1">
    <location>
        <begin position="403"/>
        <end position="406"/>
    </location>
    <ligand>
        <name>GMP</name>
        <dbReference type="ChEBI" id="CHEBI:58115"/>
    </ligand>
</feature>
<feature type="binding site" evidence="1">
    <location>
        <position position="410"/>
    </location>
    <ligand>
        <name>GMP</name>
        <dbReference type="ChEBI" id="CHEBI:58115"/>
    </ligand>
</feature>
<feature type="binding site" evidence="1">
    <location>
        <begin position="429"/>
        <end position="432"/>
    </location>
    <ligand>
        <name>GMP</name>
        <dbReference type="ChEBI" id="CHEBI:58115"/>
    </ligand>
</feature>
<protein>
    <recommendedName>
        <fullName evidence="1">RNA-splicing ligase RtcB homolog 2</fullName>
        <ecNumber evidence="1">6.5.1.8</ecNumber>
    </recommendedName>
    <alternativeName>
        <fullName evidence="1">3'-phosphate/5'-hydroxy nucleic acid ligase 2</fullName>
    </alternativeName>
</protein>
<comment type="function">
    <text evidence="1">Catalytic subunit of the tRNA-splicing ligase complex that acts by directly joining spliced tRNA halves to mature-sized tRNAs by incorporating the precursor-derived splice junction phosphate into the mature tRNA as a canonical 3',5'-phosphodiester. May act as an RNA ligase with broad substrate specificity, and may function toward other RNAs.</text>
</comment>
<comment type="catalytic activity">
    <reaction evidence="1">
        <text>a 3'-end 3'-phospho-ribonucleotide-RNA + a 5'-end dephospho-ribonucleoside-RNA + GTP = a ribonucleotidyl-ribonucleotide-RNA + GMP + diphosphate</text>
        <dbReference type="Rhea" id="RHEA:68076"/>
        <dbReference type="Rhea" id="RHEA-COMP:10463"/>
        <dbReference type="Rhea" id="RHEA-COMP:13936"/>
        <dbReference type="Rhea" id="RHEA-COMP:17355"/>
        <dbReference type="ChEBI" id="CHEBI:33019"/>
        <dbReference type="ChEBI" id="CHEBI:37565"/>
        <dbReference type="ChEBI" id="CHEBI:58115"/>
        <dbReference type="ChEBI" id="CHEBI:83062"/>
        <dbReference type="ChEBI" id="CHEBI:138284"/>
        <dbReference type="ChEBI" id="CHEBI:173118"/>
        <dbReference type="EC" id="6.5.1.8"/>
    </reaction>
</comment>
<comment type="catalytic activity">
    <reaction evidence="1">
        <text>a 3'-end 2',3'-cyclophospho-ribonucleotide-RNA + a 5'-end dephospho-ribonucleoside-RNA + GTP + H2O = a ribonucleotidyl-ribonucleotide-RNA + GMP + diphosphate + H(+)</text>
        <dbReference type="Rhea" id="RHEA:68080"/>
        <dbReference type="Rhea" id="RHEA-COMP:10464"/>
        <dbReference type="Rhea" id="RHEA-COMP:13936"/>
        <dbReference type="Rhea" id="RHEA-COMP:17355"/>
        <dbReference type="ChEBI" id="CHEBI:15377"/>
        <dbReference type="ChEBI" id="CHEBI:15378"/>
        <dbReference type="ChEBI" id="CHEBI:33019"/>
        <dbReference type="ChEBI" id="CHEBI:37565"/>
        <dbReference type="ChEBI" id="CHEBI:58115"/>
        <dbReference type="ChEBI" id="CHEBI:83064"/>
        <dbReference type="ChEBI" id="CHEBI:138284"/>
        <dbReference type="ChEBI" id="CHEBI:173118"/>
        <dbReference type="EC" id="6.5.1.8"/>
    </reaction>
</comment>
<comment type="cofactor">
    <cofactor evidence="1">
        <name>Mn(2+)</name>
        <dbReference type="ChEBI" id="CHEBI:29035"/>
    </cofactor>
    <text evidence="1">Binds 2 manganese ions per subunit.</text>
</comment>
<comment type="subunit">
    <text evidence="1">Catalytic component of the tRNA-splicing ligase complex.</text>
</comment>
<comment type="miscellaneous">
    <text evidence="1">Ligation probably proceeds through 3 nucleotidyl transfer steps, with 2',3'-cyclic phosphate termini being hydrolyzed to 3'-P termini in a step that precedes 3'-P activation with GMP. In the first nucleotidyl transfer step, RTCB reacts with GTP to form a covalent RTCB-histidine-GMP intermediate with release of PPi; in the second step, the GMP moiety is transferred to the RNA 3'-P; in the third step, the 5'-OH from the opposite RNA strand attacks the activated 3'-P to form a 3',5'-phosphodiester bond and release GMP.</text>
</comment>
<comment type="similarity">
    <text evidence="1">Belongs to the RtcB family.</text>
</comment>
<accession>B0XKF3</accession>